<feature type="signal peptide" evidence="3">
    <location>
        <begin position="1"/>
        <end position="21"/>
    </location>
</feature>
<feature type="chain" id="PRO_0000026829" description="Xaa-Pro aminopeptidase 2">
    <location>
        <begin position="22"/>
        <end position="649"/>
    </location>
</feature>
<feature type="propeptide" id="PRO_0000026830" description="Removed in mature form" evidence="9">
    <location>
        <begin position="650"/>
        <end position="674"/>
    </location>
</feature>
<feature type="binding site" evidence="1">
    <location>
        <position position="116"/>
    </location>
    <ligand>
        <name>substrate</name>
    </ligand>
</feature>
<feature type="binding site" evidence="1">
    <location>
        <position position="430"/>
    </location>
    <ligand>
        <name>substrate</name>
    </ligand>
</feature>
<feature type="binding site" evidence="1">
    <location>
        <position position="450"/>
    </location>
    <ligand>
        <name>Zn(2+)</name>
        <dbReference type="ChEBI" id="CHEBI:29105"/>
        <label>1</label>
    </ligand>
</feature>
<feature type="binding site" evidence="1">
    <location>
        <position position="461"/>
    </location>
    <ligand>
        <name>Zn(2+)</name>
        <dbReference type="ChEBI" id="CHEBI:29105"/>
        <label>1</label>
    </ligand>
</feature>
<feature type="binding site" evidence="1">
    <location>
        <position position="461"/>
    </location>
    <ligand>
        <name>Zn(2+)</name>
        <dbReference type="ChEBI" id="CHEBI:29105"/>
        <label>2</label>
    </ligand>
</feature>
<feature type="binding site" evidence="1">
    <location>
        <position position="524"/>
    </location>
    <ligand>
        <name>substrate</name>
    </ligand>
</feature>
<feature type="binding site" evidence="1">
    <location>
        <position position="524"/>
    </location>
    <ligand>
        <name>Zn(2+)</name>
        <dbReference type="ChEBI" id="CHEBI:29105"/>
        <label>2</label>
    </ligand>
</feature>
<feature type="binding site" evidence="1">
    <location>
        <position position="533"/>
    </location>
    <ligand>
        <name>substrate</name>
    </ligand>
</feature>
<feature type="binding site" evidence="1">
    <location>
        <position position="555"/>
    </location>
    <ligand>
        <name>substrate</name>
    </ligand>
</feature>
<feature type="binding site" evidence="1">
    <location>
        <position position="555"/>
    </location>
    <ligand>
        <name>Zn(2+)</name>
        <dbReference type="ChEBI" id="CHEBI:29105"/>
        <label>2</label>
    </ligand>
</feature>
<feature type="binding site" evidence="1">
    <location>
        <position position="569"/>
    </location>
    <ligand>
        <name>Zn(2+)</name>
        <dbReference type="ChEBI" id="CHEBI:29105"/>
        <label>1</label>
    </ligand>
</feature>
<feature type="binding site" evidence="1">
    <location>
        <position position="569"/>
    </location>
    <ligand>
        <name>Zn(2+)</name>
        <dbReference type="ChEBI" id="CHEBI:29105"/>
        <label>2</label>
    </ligand>
</feature>
<feature type="lipid moiety-binding region" description="GPI-anchor amidated alanine" evidence="2">
    <location>
        <position position="649"/>
    </location>
</feature>
<feature type="glycosylation site" description="N-linked (GlcNAc...) asparagine" evidence="3">
    <location>
        <position position="35"/>
    </location>
</feature>
<feature type="glycosylation site" description="N-linked (GlcNAc...) asparagine" evidence="3">
    <location>
        <position position="49"/>
    </location>
</feature>
<feature type="glycosylation site" description="N-linked (GlcNAc...) asparagine" evidence="3">
    <location>
        <position position="65"/>
    </location>
</feature>
<feature type="glycosylation site" description="N-linked (GlcNAc...) asparagine" evidence="3">
    <location>
        <position position="278"/>
    </location>
</feature>
<feature type="glycosylation site" description="N-linked (GlcNAc...) asparagine" evidence="3">
    <location>
        <position position="291"/>
    </location>
</feature>
<feature type="sequence variant" id="VAR_071310" description="In dbSNP:rs138365897." evidence="7">
    <original>T</original>
    <variation>I</variation>
    <location>
        <position position="215"/>
    </location>
</feature>
<feature type="sequence variant" id="VAR_071311" description="In dbSNP:rs61733030." evidence="7">
    <original>V</original>
    <variation>I</variation>
    <location>
        <position position="223"/>
    </location>
</feature>
<feature type="sequence variant" id="VAR_071312" description="In dbSNP:rs41311662." evidence="7">
    <original>K</original>
    <variation>N</variation>
    <location>
        <position position="232"/>
    </location>
</feature>
<feature type="sequence conflict" description="In Ref. 1; AAB96394." evidence="9" ref="1">
    <original>V</original>
    <variation>L</variation>
    <location>
        <position position="26"/>
    </location>
</feature>
<feature type="sequence conflict" description="In Ref. 1; AAB96394." evidence="9" ref="1">
    <original>K</original>
    <variation>R</variation>
    <location>
        <position position="339"/>
    </location>
</feature>
<gene>
    <name type="primary">XPNPEP2</name>
</gene>
<keyword id="KW-0031">Aminopeptidase</keyword>
<keyword id="KW-1003">Cell membrane</keyword>
<keyword id="KW-0325">Glycoprotein</keyword>
<keyword id="KW-0336">GPI-anchor</keyword>
<keyword id="KW-0378">Hydrolase</keyword>
<keyword id="KW-0449">Lipoprotein</keyword>
<keyword id="KW-0472">Membrane</keyword>
<keyword id="KW-0479">Metal-binding</keyword>
<keyword id="KW-0482">Metalloprotease</keyword>
<keyword id="KW-0645">Protease</keyword>
<keyword id="KW-1267">Proteomics identification</keyword>
<keyword id="KW-1185">Reference proteome</keyword>
<keyword id="KW-0732">Signal</keyword>
<keyword id="KW-0862">Zinc</keyword>
<proteinExistence type="evidence at protein level"/>
<accession>O43895</accession>
<accession>A0AV16</accession>
<accession>O75994</accession>
<organism>
    <name type="scientific">Homo sapiens</name>
    <name type="common">Human</name>
    <dbReference type="NCBI Taxonomy" id="9606"/>
    <lineage>
        <taxon>Eukaryota</taxon>
        <taxon>Metazoa</taxon>
        <taxon>Chordata</taxon>
        <taxon>Craniata</taxon>
        <taxon>Vertebrata</taxon>
        <taxon>Euteleostomi</taxon>
        <taxon>Mammalia</taxon>
        <taxon>Eutheria</taxon>
        <taxon>Euarchontoglires</taxon>
        <taxon>Primates</taxon>
        <taxon>Haplorrhini</taxon>
        <taxon>Catarrhini</taxon>
        <taxon>Hominidae</taxon>
        <taxon>Homo</taxon>
    </lineage>
</organism>
<comment type="function">
    <text evidence="4">Membrane-bound metalloprotease which catalyzes the removal of a penultimate prolyl residue from the N-termini of peptides, such as Arg-Pro-Pro. May play a role in the metabolism of the vasodilator bradykinin.</text>
</comment>
<comment type="catalytic activity">
    <reaction evidence="4">
        <text>Release of any N-terminal amino acid, including proline, that is linked to proline, even from a dipeptide or tripeptide.</text>
        <dbReference type="EC" id="3.4.11.9"/>
    </reaction>
</comment>
<comment type="cofactor">
    <cofactor evidence="2">
        <name>Zn(2+)</name>
        <dbReference type="ChEBI" id="CHEBI:29105"/>
    </cofactor>
</comment>
<comment type="activity regulation">
    <text evidence="4">Inhibited by apstatin and the chelating agent 1,10-phenanthroline. Also inhibited by high concentrations of Zn(2+). Not significantly inhibited by bestatin or phosphoramidon.</text>
</comment>
<comment type="biophysicochemical properties">
    <kinetics>
        <KM evidence="4">0.837 mM for Arg-Pro-Pro</KM>
        <KM evidence="4">75 uM for Arg-Pro-Pro-Gly-Phe-Ser-Pro-Phe-Arg (bradykinin)</KM>
        <KM evidence="4">56 uM for Arg-Pro-Pro-Gly-Phe-Ser-Pro-Phe (bradykinin[1-8])</KM>
        <KM evidence="4">18 uM for synthetic fluorescent substrate Lys(Dnp)-Pro-Pro-Gly-Phe-Ser-Pro-Lys(Abz)NH(2)</KM>
        <KM evidence="4">20 uM for synthetic fluorescent substrate Lys(Dnp)-Pro-Pro-Gly-Lys(Abz)NH(2)</KM>
        <KM evidence="4">19 uM for synthetic fluorescent substrate Lys(Dnp)-Pro-Pro-Lys(Abz)NH(2)</KM>
    </kinetics>
    <phDependence>
        <text evidence="4">Optimum pH is 7.4.</text>
    </phDependence>
</comment>
<comment type="subunit">
    <text evidence="2">Homotrimer.</text>
</comment>
<comment type="subcellular location">
    <subcellularLocation>
        <location evidence="2">Cell membrane</location>
        <topology evidence="2">Lipid-anchor</topology>
        <topology evidence="2">GPI-anchor</topology>
    </subcellularLocation>
</comment>
<comment type="tissue specificity">
    <text evidence="8">Expressed in kidney, lung, heart, placenta, liver, small intestine and colon. No expression in brain, skeletal muscle, pancreas, spleen, thymus, prostate, testis and ovary.</text>
</comment>
<comment type="PTM">
    <text evidence="4">N-glycosylated.</text>
</comment>
<comment type="disease" evidence="5 6 7">
    <disease id="DI-03955">
        <name>Angioedema induced by ACE inhibitors</name>
        <acronym>AEACEI</acronym>
        <description>A potentially life-threatening side effect of ACE inhibitors that appears in a subset of patients taking these drugs for hypertension and cardiovascular disease treatment. AEACEI is characterized by swelling of the face, lips, tongue, and airway that can lead to suffocation and death if severe.</description>
        <dbReference type="MIM" id="300909"/>
    </disease>
    <text>Disease susceptibility is associated with variants affecting the gene represented in this entry.</text>
</comment>
<comment type="similarity">
    <text evidence="9">Belongs to the peptidase M24B family.</text>
</comment>
<evidence type="ECO:0000250" key="1">
    <source>
        <dbReference type="UniProtKB" id="O44750"/>
    </source>
</evidence>
<evidence type="ECO:0000250" key="2">
    <source>
        <dbReference type="UniProtKB" id="Q95333"/>
    </source>
</evidence>
<evidence type="ECO:0000255" key="3"/>
<evidence type="ECO:0000269" key="4">
    <source>
    </source>
</evidence>
<evidence type="ECO:0000269" key="5">
    <source>
    </source>
</evidence>
<evidence type="ECO:0000269" key="6">
    <source>
    </source>
</evidence>
<evidence type="ECO:0000269" key="7">
    <source>
    </source>
</evidence>
<evidence type="ECO:0000269" key="8">
    <source>
    </source>
</evidence>
<evidence type="ECO:0000305" key="9"/>
<dbReference type="EC" id="3.4.11.9" evidence="4"/>
<dbReference type="EMBL" id="U90724">
    <property type="protein sequence ID" value="AAB96394.2"/>
    <property type="molecule type" value="mRNA"/>
</dbReference>
<dbReference type="EMBL" id="AF195953">
    <property type="protein sequence ID" value="AAG28480.1"/>
    <property type="molecule type" value="Genomic_DNA"/>
</dbReference>
<dbReference type="EMBL" id="AL023653">
    <property type="status" value="NOT_ANNOTATED_CDS"/>
    <property type="molecule type" value="Genomic_DNA"/>
</dbReference>
<dbReference type="EMBL" id="BC126174">
    <property type="protein sequence ID" value="AAI26175.1"/>
    <property type="molecule type" value="mRNA"/>
</dbReference>
<dbReference type="CCDS" id="CCDS14613.1"/>
<dbReference type="RefSeq" id="NP_003390.4">
    <property type="nucleotide sequence ID" value="NM_003399.5"/>
</dbReference>
<dbReference type="SMR" id="O43895"/>
<dbReference type="BioGRID" id="113347">
    <property type="interactions" value="2"/>
</dbReference>
<dbReference type="FunCoup" id="O43895">
    <property type="interactions" value="104"/>
</dbReference>
<dbReference type="IntAct" id="O43895">
    <property type="interactions" value="1"/>
</dbReference>
<dbReference type="STRING" id="9606.ENSP00000360147"/>
<dbReference type="BindingDB" id="O43895"/>
<dbReference type="ChEMBL" id="CHEMBL4610"/>
<dbReference type="GuidetoPHARMACOLOGY" id="1579"/>
<dbReference type="MEROPS" id="M24.005"/>
<dbReference type="GlyCosmos" id="O43895">
    <property type="glycosylation" value="5 sites, No reported glycans"/>
</dbReference>
<dbReference type="GlyGen" id="O43895">
    <property type="glycosylation" value="5 sites, 20 N-linked glycans (2 sites)"/>
</dbReference>
<dbReference type="iPTMnet" id="O43895"/>
<dbReference type="PhosphoSitePlus" id="O43895"/>
<dbReference type="BioMuta" id="XPNPEP2"/>
<dbReference type="jPOST" id="O43895"/>
<dbReference type="MassIVE" id="O43895"/>
<dbReference type="PaxDb" id="9606-ENSP00000360147"/>
<dbReference type="PeptideAtlas" id="O43895"/>
<dbReference type="ProteomicsDB" id="49219"/>
<dbReference type="Antibodypedia" id="16116">
    <property type="antibodies" value="176 antibodies from 28 providers"/>
</dbReference>
<dbReference type="DNASU" id="7512"/>
<dbReference type="Ensembl" id="ENST00000371106.4">
    <property type="protein sequence ID" value="ENSP00000360147.3"/>
    <property type="gene ID" value="ENSG00000122121.12"/>
</dbReference>
<dbReference type="GeneID" id="7512"/>
<dbReference type="KEGG" id="hsa:7512"/>
<dbReference type="MANE-Select" id="ENST00000371106.4">
    <property type="protein sequence ID" value="ENSP00000360147.3"/>
    <property type="RefSeq nucleotide sequence ID" value="NM_003399.6"/>
    <property type="RefSeq protein sequence ID" value="NP_003390.4"/>
</dbReference>
<dbReference type="UCSC" id="uc004eut.2">
    <property type="organism name" value="human"/>
</dbReference>
<dbReference type="AGR" id="HGNC:12823"/>
<dbReference type="CTD" id="7512"/>
<dbReference type="DisGeNET" id="7512"/>
<dbReference type="GeneCards" id="XPNPEP2"/>
<dbReference type="HGNC" id="HGNC:12823">
    <property type="gene designation" value="XPNPEP2"/>
</dbReference>
<dbReference type="HPA" id="ENSG00000122121">
    <property type="expression patterns" value="Group enriched (intestine, kidney)"/>
</dbReference>
<dbReference type="MalaCards" id="XPNPEP2"/>
<dbReference type="MIM" id="300145">
    <property type="type" value="gene"/>
</dbReference>
<dbReference type="MIM" id="300909">
    <property type="type" value="phenotype"/>
</dbReference>
<dbReference type="neXtProt" id="NX_O43895"/>
<dbReference type="OpenTargets" id="ENSG00000122121"/>
<dbReference type="Orphanet" id="100057">
    <property type="disease" value="Renin-angiotensin-aldosterone system-blocker-induced angioedema"/>
</dbReference>
<dbReference type="PharmGKB" id="PA37416"/>
<dbReference type="VEuPathDB" id="HostDB:ENSG00000122121"/>
<dbReference type="eggNOG" id="KOG2413">
    <property type="taxonomic scope" value="Eukaryota"/>
</dbReference>
<dbReference type="GeneTree" id="ENSGT00940000157196"/>
<dbReference type="HOGENOM" id="CLU_011781_2_2_1"/>
<dbReference type="InParanoid" id="O43895"/>
<dbReference type="OMA" id="LTHFRYT"/>
<dbReference type="OrthoDB" id="9995434at2759"/>
<dbReference type="PAN-GO" id="O43895">
    <property type="GO annotations" value="0 GO annotations based on evolutionary models"/>
</dbReference>
<dbReference type="PhylomeDB" id="O43895"/>
<dbReference type="TreeFam" id="TF314183"/>
<dbReference type="BRENDA" id="3.4.11.9">
    <property type="organism ID" value="2681"/>
</dbReference>
<dbReference type="PathwayCommons" id="O43895"/>
<dbReference type="Reactome" id="R-HSA-163125">
    <property type="pathway name" value="Post-translational modification: synthesis of GPI-anchored proteins"/>
</dbReference>
<dbReference type="SignaLink" id="O43895"/>
<dbReference type="BioGRID-ORCS" id="7512">
    <property type="hits" value="10 hits in 767 CRISPR screens"/>
</dbReference>
<dbReference type="GeneWiki" id="XPNPEP2"/>
<dbReference type="GenomeRNAi" id="7512"/>
<dbReference type="Pharos" id="O43895">
    <property type="development level" value="Tchem"/>
</dbReference>
<dbReference type="PRO" id="PR:O43895"/>
<dbReference type="Proteomes" id="UP000005640">
    <property type="component" value="Chromosome X"/>
</dbReference>
<dbReference type="RNAct" id="O43895">
    <property type="molecule type" value="protein"/>
</dbReference>
<dbReference type="Bgee" id="ENSG00000122121">
    <property type="expression patterns" value="Expressed in ileal mucosa and 93 other cell types or tissues"/>
</dbReference>
<dbReference type="GO" id="GO:0070062">
    <property type="term" value="C:extracellular exosome"/>
    <property type="evidence" value="ECO:0000314"/>
    <property type="project" value="UniProtKB"/>
</dbReference>
<dbReference type="GO" id="GO:0005576">
    <property type="term" value="C:extracellular region"/>
    <property type="evidence" value="ECO:0000304"/>
    <property type="project" value="Reactome"/>
</dbReference>
<dbReference type="GO" id="GO:0016020">
    <property type="term" value="C:membrane"/>
    <property type="evidence" value="ECO:0000304"/>
    <property type="project" value="ProtInc"/>
</dbReference>
<dbReference type="GO" id="GO:0005886">
    <property type="term" value="C:plasma membrane"/>
    <property type="evidence" value="ECO:0000304"/>
    <property type="project" value="Reactome"/>
</dbReference>
<dbReference type="GO" id="GO:0098552">
    <property type="term" value="C:side of membrane"/>
    <property type="evidence" value="ECO:0007669"/>
    <property type="project" value="UniProtKB-KW"/>
</dbReference>
<dbReference type="GO" id="GO:0004177">
    <property type="term" value="F:aminopeptidase activity"/>
    <property type="evidence" value="ECO:0000304"/>
    <property type="project" value="ProtInc"/>
</dbReference>
<dbReference type="GO" id="GO:0046872">
    <property type="term" value="F:metal ion binding"/>
    <property type="evidence" value="ECO:0007669"/>
    <property type="project" value="UniProtKB-KW"/>
</dbReference>
<dbReference type="GO" id="GO:0070006">
    <property type="term" value="F:metalloaminopeptidase activity"/>
    <property type="evidence" value="ECO:0007669"/>
    <property type="project" value="InterPro"/>
</dbReference>
<dbReference type="GO" id="GO:0006508">
    <property type="term" value="P:proteolysis"/>
    <property type="evidence" value="ECO:0007669"/>
    <property type="project" value="UniProtKB-KW"/>
</dbReference>
<dbReference type="CDD" id="cd01085">
    <property type="entry name" value="APP"/>
    <property type="match status" value="1"/>
</dbReference>
<dbReference type="FunFam" id="3.40.350.10:FF:000008">
    <property type="entry name" value="xaa-Pro aminopeptidase 2"/>
    <property type="match status" value="1"/>
</dbReference>
<dbReference type="FunFam" id="3.90.230.10:FF:000009">
    <property type="entry name" value="xaa-Pro aminopeptidase 2"/>
    <property type="match status" value="1"/>
</dbReference>
<dbReference type="FunFam" id="3.40.350.10:FF:000003">
    <property type="entry name" value="Xaa-pro aminopeptidase P"/>
    <property type="match status" value="1"/>
</dbReference>
<dbReference type="Gene3D" id="3.90.230.10">
    <property type="entry name" value="Creatinase/methionine aminopeptidase superfamily"/>
    <property type="match status" value="1"/>
</dbReference>
<dbReference type="Gene3D" id="3.40.350.10">
    <property type="entry name" value="Creatinase/prolidase N-terminal domain"/>
    <property type="match status" value="2"/>
</dbReference>
<dbReference type="InterPro" id="IPR029149">
    <property type="entry name" value="Creatin/AminoP/Spt16_N"/>
</dbReference>
<dbReference type="InterPro" id="IPR036005">
    <property type="entry name" value="Creatinase/aminopeptidase-like"/>
</dbReference>
<dbReference type="InterPro" id="IPR000587">
    <property type="entry name" value="Creatinase_N"/>
</dbReference>
<dbReference type="InterPro" id="IPR000994">
    <property type="entry name" value="Pept_M24"/>
</dbReference>
<dbReference type="InterPro" id="IPR033740">
    <property type="entry name" value="Pept_M24B"/>
</dbReference>
<dbReference type="InterPro" id="IPR032416">
    <property type="entry name" value="Peptidase_M24_C"/>
</dbReference>
<dbReference type="InterPro" id="IPR001131">
    <property type="entry name" value="Peptidase_M24B_aminopep-P_CS"/>
</dbReference>
<dbReference type="InterPro" id="IPR050422">
    <property type="entry name" value="X-Pro_aminopeptidase_P"/>
</dbReference>
<dbReference type="PANTHER" id="PTHR43763">
    <property type="entry name" value="XAA-PRO AMINOPEPTIDASE 1"/>
    <property type="match status" value="1"/>
</dbReference>
<dbReference type="PANTHER" id="PTHR43763:SF4">
    <property type="entry name" value="XAA-PRO AMINOPEPTIDASE 2"/>
    <property type="match status" value="1"/>
</dbReference>
<dbReference type="Pfam" id="PF01321">
    <property type="entry name" value="Creatinase_N"/>
    <property type="match status" value="1"/>
</dbReference>
<dbReference type="Pfam" id="PF16189">
    <property type="entry name" value="Creatinase_N_2"/>
    <property type="match status" value="1"/>
</dbReference>
<dbReference type="Pfam" id="PF00557">
    <property type="entry name" value="Peptidase_M24"/>
    <property type="match status" value="1"/>
</dbReference>
<dbReference type="Pfam" id="PF16188">
    <property type="entry name" value="Peptidase_M24_C"/>
    <property type="match status" value="1"/>
</dbReference>
<dbReference type="SUPFAM" id="SSF55920">
    <property type="entry name" value="Creatinase/aminopeptidase"/>
    <property type="match status" value="1"/>
</dbReference>
<dbReference type="SUPFAM" id="SSF53092">
    <property type="entry name" value="Creatinase/prolidase N-terminal domain"/>
    <property type="match status" value="1"/>
</dbReference>
<dbReference type="PROSITE" id="PS00491">
    <property type="entry name" value="PROLINE_PEPTIDASE"/>
    <property type="match status" value="1"/>
</dbReference>
<name>XPP2_HUMAN</name>
<sequence>MARAHWGCCPWLVLLCACAWGHTKPVDLGGQDVRNCSTNPPYLPVTVVNTTMSLTALRQQMQTQNLSAYIIPGTDAHMNEYIGQHDERRAWITGFTGSAGTAVVTMKKAAVWTDSRYWTQAERQMDCNWELHKEVGTTPIVTWLLTEIPAGGRVGFDPFLLSIDTWESYDLALQGSNRQLVSITTNLVDLVWGSERPPVPNQPIYALQEAFTGSTWQEKVSGVRSQMQKHQKVPTAVLLSALEETAWLFNLRASDIPYNPFFYSYTLLTDSSIRLFANKSRFSSETLSYLNSSCTGPMCVQIEDYSQVRDSIQAYSLGDVRIWIGTSYTMYGIYEMIPKEKLVTDTYSPVMMTKAVKNSKEQALLKASHVRDAVAVIRYLVWLEKNVPKGTVDEFSGAEIVDKFRGEEQFSSGPSFETISASGLNAALAHYSPTKELNRKLSSDEMYLLDSGGQYWDGTTDITRTVHWGTPSAFQKEAYTRVLIGNIDLSRLIFPAATSGRMVEAFARRALWDAGLNYGHGTGHGIGNFLCVHEWPVGFQSNNIAMAKGMFTSIEPGYYKDGEFGIRLEDVALVVEAKTKYPGSYLTFEVVSFVPYDRNLIDVSLLSPEHLQYLNRYYQTIREKVGPELQRRQLLEEFEWLQQHTEPLAARAPDTASWASVLVVSTLAILGWSV</sequence>
<protein>
    <recommendedName>
        <fullName>Xaa-Pro aminopeptidase 2</fullName>
        <ecNumber evidence="4">3.4.11.9</ecNumber>
    </recommendedName>
    <alternativeName>
        <fullName>Aminoacylproline aminopeptidase</fullName>
    </alternativeName>
    <alternativeName>
        <fullName>Membrane-bound aminopeptidase P</fullName>
        <shortName>Membrane-bound APP</shortName>
        <shortName>Membrane-bound AmP</shortName>
        <shortName>mAmP</shortName>
    </alternativeName>
    <alternativeName>
        <fullName>X-Pro aminopeptidase 2</fullName>
    </alternativeName>
</protein>
<reference key="1">
    <citation type="journal article" date="1997" name="Biochim. Biophys. Acta">
        <title>Cloning and tissue distribution of human membrane-bound aminopeptidase P.</title>
        <authorList>
            <person name="Venema R.C."/>
            <person name="Ju H."/>
            <person name="Zou R."/>
            <person name="Venema V.J."/>
            <person name="Ryan J.W."/>
        </authorList>
    </citation>
    <scope>NUCLEOTIDE SEQUENCE [MRNA]</scope>
    <scope>TISSUE SPECIFICITY</scope>
    <source>
        <tissue>Kidney</tissue>
        <tissue>Lung</tissue>
    </source>
</reference>
<reference key="2">
    <citation type="submission" date="2000-09" db="EMBL/GenBank/DDBJ databases">
        <authorList>
            <person name="Sprinkle T.J.C."/>
            <person name="Venema R.C."/>
            <person name="Ju H."/>
            <person name="Zou R."/>
            <person name="Venema V.J."/>
            <person name="Ryan J.W."/>
        </authorList>
    </citation>
    <scope>SEQUENCE REVISION</scope>
</reference>
<reference key="3">
    <citation type="submission" date="1999-10" db="EMBL/GenBank/DDBJ databases">
        <title>Human membrane-bound aminopeptidase P genomic DNA.</title>
        <authorList>
            <person name="Ryan J.W."/>
            <person name="Jin L."/>
            <person name="Horvath I."/>
            <person name="Sprinkle T.J.C."/>
        </authorList>
    </citation>
    <scope>NUCLEOTIDE SEQUENCE [GENOMIC DNA]</scope>
</reference>
<reference key="4">
    <citation type="journal article" date="2005" name="Nature">
        <title>The DNA sequence of the human X chromosome.</title>
        <authorList>
            <person name="Ross M.T."/>
            <person name="Grafham D.V."/>
            <person name="Coffey A.J."/>
            <person name="Scherer S."/>
            <person name="McLay K."/>
            <person name="Muzny D."/>
            <person name="Platzer M."/>
            <person name="Howell G.R."/>
            <person name="Burrows C."/>
            <person name="Bird C.P."/>
            <person name="Frankish A."/>
            <person name="Lovell F.L."/>
            <person name="Howe K.L."/>
            <person name="Ashurst J.L."/>
            <person name="Fulton R.S."/>
            <person name="Sudbrak R."/>
            <person name="Wen G."/>
            <person name="Jones M.C."/>
            <person name="Hurles M.E."/>
            <person name="Andrews T.D."/>
            <person name="Scott C.E."/>
            <person name="Searle S."/>
            <person name="Ramser J."/>
            <person name="Whittaker A."/>
            <person name="Deadman R."/>
            <person name="Carter N.P."/>
            <person name="Hunt S.E."/>
            <person name="Chen R."/>
            <person name="Cree A."/>
            <person name="Gunaratne P."/>
            <person name="Havlak P."/>
            <person name="Hodgson A."/>
            <person name="Metzker M.L."/>
            <person name="Richards S."/>
            <person name="Scott G."/>
            <person name="Steffen D."/>
            <person name="Sodergren E."/>
            <person name="Wheeler D.A."/>
            <person name="Worley K.C."/>
            <person name="Ainscough R."/>
            <person name="Ambrose K.D."/>
            <person name="Ansari-Lari M.A."/>
            <person name="Aradhya S."/>
            <person name="Ashwell R.I."/>
            <person name="Babbage A.K."/>
            <person name="Bagguley C.L."/>
            <person name="Ballabio A."/>
            <person name="Banerjee R."/>
            <person name="Barker G.E."/>
            <person name="Barlow K.F."/>
            <person name="Barrett I.P."/>
            <person name="Bates K.N."/>
            <person name="Beare D.M."/>
            <person name="Beasley H."/>
            <person name="Beasley O."/>
            <person name="Beck A."/>
            <person name="Bethel G."/>
            <person name="Blechschmidt K."/>
            <person name="Brady N."/>
            <person name="Bray-Allen S."/>
            <person name="Bridgeman A.M."/>
            <person name="Brown A.J."/>
            <person name="Brown M.J."/>
            <person name="Bonnin D."/>
            <person name="Bruford E.A."/>
            <person name="Buhay C."/>
            <person name="Burch P."/>
            <person name="Burford D."/>
            <person name="Burgess J."/>
            <person name="Burrill W."/>
            <person name="Burton J."/>
            <person name="Bye J.M."/>
            <person name="Carder C."/>
            <person name="Carrel L."/>
            <person name="Chako J."/>
            <person name="Chapman J.C."/>
            <person name="Chavez D."/>
            <person name="Chen E."/>
            <person name="Chen G."/>
            <person name="Chen Y."/>
            <person name="Chen Z."/>
            <person name="Chinault C."/>
            <person name="Ciccodicola A."/>
            <person name="Clark S.Y."/>
            <person name="Clarke G."/>
            <person name="Clee C.M."/>
            <person name="Clegg S."/>
            <person name="Clerc-Blankenburg K."/>
            <person name="Clifford K."/>
            <person name="Cobley V."/>
            <person name="Cole C.G."/>
            <person name="Conquer J.S."/>
            <person name="Corby N."/>
            <person name="Connor R.E."/>
            <person name="David R."/>
            <person name="Davies J."/>
            <person name="Davis C."/>
            <person name="Davis J."/>
            <person name="Delgado O."/>
            <person name="Deshazo D."/>
            <person name="Dhami P."/>
            <person name="Ding Y."/>
            <person name="Dinh H."/>
            <person name="Dodsworth S."/>
            <person name="Draper H."/>
            <person name="Dugan-Rocha S."/>
            <person name="Dunham A."/>
            <person name="Dunn M."/>
            <person name="Durbin K.J."/>
            <person name="Dutta I."/>
            <person name="Eades T."/>
            <person name="Ellwood M."/>
            <person name="Emery-Cohen A."/>
            <person name="Errington H."/>
            <person name="Evans K.L."/>
            <person name="Faulkner L."/>
            <person name="Francis F."/>
            <person name="Frankland J."/>
            <person name="Fraser A.E."/>
            <person name="Galgoczy P."/>
            <person name="Gilbert J."/>
            <person name="Gill R."/>
            <person name="Gloeckner G."/>
            <person name="Gregory S.G."/>
            <person name="Gribble S."/>
            <person name="Griffiths C."/>
            <person name="Grocock R."/>
            <person name="Gu Y."/>
            <person name="Gwilliam R."/>
            <person name="Hamilton C."/>
            <person name="Hart E.A."/>
            <person name="Hawes A."/>
            <person name="Heath P.D."/>
            <person name="Heitmann K."/>
            <person name="Hennig S."/>
            <person name="Hernandez J."/>
            <person name="Hinzmann B."/>
            <person name="Ho S."/>
            <person name="Hoffs M."/>
            <person name="Howden P.J."/>
            <person name="Huckle E.J."/>
            <person name="Hume J."/>
            <person name="Hunt P.J."/>
            <person name="Hunt A.R."/>
            <person name="Isherwood J."/>
            <person name="Jacob L."/>
            <person name="Johnson D."/>
            <person name="Jones S."/>
            <person name="de Jong P.J."/>
            <person name="Joseph S.S."/>
            <person name="Keenan S."/>
            <person name="Kelly S."/>
            <person name="Kershaw J.K."/>
            <person name="Khan Z."/>
            <person name="Kioschis P."/>
            <person name="Klages S."/>
            <person name="Knights A.J."/>
            <person name="Kosiura A."/>
            <person name="Kovar-Smith C."/>
            <person name="Laird G.K."/>
            <person name="Langford C."/>
            <person name="Lawlor S."/>
            <person name="Leversha M."/>
            <person name="Lewis L."/>
            <person name="Liu W."/>
            <person name="Lloyd C."/>
            <person name="Lloyd D.M."/>
            <person name="Loulseged H."/>
            <person name="Loveland J.E."/>
            <person name="Lovell J.D."/>
            <person name="Lozado R."/>
            <person name="Lu J."/>
            <person name="Lyne R."/>
            <person name="Ma J."/>
            <person name="Maheshwari M."/>
            <person name="Matthews L.H."/>
            <person name="McDowall J."/>
            <person name="McLaren S."/>
            <person name="McMurray A."/>
            <person name="Meidl P."/>
            <person name="Meitinger T."/>
            <person name="Milne S."/>
            <person name="Miner G."/>
            <person name="Mistry S.L."/>
            <person name="Morgan M."/>
            <person name="Morris S."/>
            <person name="Mueller I."/>
            <person name="Mullikin J.C."/>
            <person name="Nguyen N."/>
            <person name="Nordsiek G."/>
            <person name="Nyakatura G."/>
            <person name="O'dell C.N."/>
            <person name="Okwuonu G."/>
            <person name="Palmer S."/>
            <person name="Pandian R."/>
            <person name="Parker D."/>
            <person name="Parrish J."/>
            <person name="Pasternak S."/>
            <person name="Patel D."/>
            <person name="Pearce A.V."/>
            <person name="Pearson D.M."/>
            <person name="Pelan S.E."/>
            <person name="Perez L."/>
            <person name="Porter K.M."/>
            <person name="Ramsey Y."/>
            <person name="Reichwald K."/>
            <person name="Rhodes S."/>
            <person name="Ridler K.A."/>
            <person name="Schlessinger D."/>
            <person name="Schueler M.G."/>
            <person name="Sehra H.K."/>
            <person name="Shaw-Smith C."/>
            <person name="Shen H."/>
            <person name="Sheridan E.M."/>
            <person name="Shownkeen R."/>
            <person name="Skuce C.D."/>
            <person name="Smith M.L."/>
            <person name="Sotheran E.C."/>
            <person name="Steingruber H.E."/>
            <person name="Steward C.A."/>
            <person name="Storey R."/>
            <person name="Swann R.M."/>
            <person name="Swarbreck D."/>
            <person name="Tabor P.E."/>
            <person name="Taudien S."/>
            <person name="Taylor T."/>
            <person name="Teague B."/>
            <person name="Thomas K."/>
            <person name="Thorpe A."/>
            <person name="Timms K."/>
            <person name="Tracey A."/>
            <person name="Trevanion S."/>
            <person name="Tromans A.C."/>
            <person name="d'Urso M."/>
            <person name="Verduzco D."/>
            <person name="Villasana D."/>
            <person name="Waldron L."/>
            <person name="Wall M."/>
            <person name="Wang Q."/>
            <person name="Warren J."/>
            <person name="Warry G.L."/>
            <person name="Wei X."/>
            <person name="West A."/>
            <person name="Whitehead S.L."/>
            <person name="Whiteley M.N."/>
            <person name="Wilkinson J.E."/>
            <person name="Willey D.L."/>
            <person name="Williams G."/>
            <person name="Williams L."/>
            <person name="Williamson A."/>
            <person name="Williamson H."/>
            <person name="Wilming L."/>
            <person name="Woodmansey R.L."/>
            <person name="Wray P.W."/>
            <person name="Yen J."/>
            <person name="Zhang J."/>
            <person name="Zhou J."/>
            <person name="Zoghbi H."/>
            <person name="Zorilla S."/>
            <person name="Buck D."/>
            <person name="Reinhardt R."/>
            <person name="Poustka A."/>
            <person name="Rosenthal A."/>
            <person name="Lehrach H."/>
            <person name="Meindl A."/>
            <person name="Minx P.J."/>
            <person name="Hillier L.W."/>
            <person name="Willard H.F."/>
            <person name="Wilson R.K."/>
            <person name="Waterston R.H."/>
            <person name="Rice C.M."/>
            <person name="Vaudin M."/>
            <person name="Coulson A."/>
            <person name="Nelson D.L."/>
            <person name="Weinstock G."/>
            <person name="Sulston J.E."/>
            <person name="Durbin R.M."/>
            <person name="Hubbard T."/>
            <person name="Gibbs R.A."/>
            <person name="Beck S."/>
            <person name="Rogers J."/>
            <person name="Bentley D.R."/>
        </authorList>
    </citation>
    <scope>NUCLEOTIDE SEQUENCE [LARGE SCALE GENOMIC DNA]</scope>
</reference>
<reference key="5">
    <citation type="journal article" date="2004" name="Genome Res.">
        <title>The status, quality, and expansion of the NIH full-length cDNA project: the Mammalian Gene Collection (MGC).</title>
        <authorList>
            <consortium name="The MGC Project Team"/>
        </authorList>
    </citation>
    <scope>NUCLEOTIDE SEQUENCE [LARGE SCALE MRNA]</scope>
    <source>
        <tissue>Colon</tissue>
    </source>
</reference>
<reference key="6">
    <citation type="journal article" date="2005" name="Am. J. Hum. Genet.">
        <title>A variant in XPNPEP2 is associated with angioedema induced by angiotensin I-converting enzyme inhibitors.</title>
        <authorList>
            <person name="Duan Q.L."/>
            <person name="Nikpoor B."/>
            <person name="Dube M.P."/>
            <person name="Molinaro G."/>
            <person name="Meijer I.A."/>
            <person name="Dion P."/>
            <person name="Rochefort D."/>
            <person name="Saint-Onge J."/>
            <person name="Flury L."/>
            <person name="Brown N.J."/>
            <person name="Gainer J.V."/>
            <person name="Rouleau J.L."/>
            <person name="Agostoni A."/>
            <person name="Cugno M."/>
            <person name="Simon P."/>
            <person name="Clavel P."/>
            <person name="Potier J."/>
            <person name="Wehbe B."/>
            <person name="Benarbia S."/>
            <person name="Marc-Aurele J."/>
            <person name="Chanard J."/>
            <person name="Foroud T."/>
            <person name="Adam A."/>
            <person name="Rouleau G.A."/>
        </authorList>
    </citation>
    <scope>INVOLVEMENT IN AEACEI</scope>
</reference>
<reference key="7">
    <citation type="journal article" date="2005" name="Biochem. J.">
        <title>Human recombinant membrane-bound aminopeptidase P: production of a soluble form and characterization using novel, internally quenched fluorescent substrates.</title>
        <authorList>
            <person name="Molinaro G."/>
            <person name="Carmona A.K."/>
            <person name="Juliano M.A."/>
            <person name="Juliano L."/>
            <person name="Malitskaya E."/>
            <person name="Yessine M.A."/>
            <person name="Chagnon M."/>
            <person name="Lepage Y."/>
            <person name="Simmons W.H."/>
            <person name="Boileau G."/>
            <person name="Adam A."/>
        </authorList>
    </citation>
    <scope>FUNCTION</scope>
    <scope>CATALYTIC ACTIVITY</scope>
    <scope>ACTIVITY REGULATION</scope>
    <scope>BIOPHYSICOCHEMICAL PROPERTIES</scope>
    <scope>GLYCOSYLATION</scope>
</reference>
<reference key="8">
    <citation type="journal article" date="2010" name="Pharmacogenet. Genomics">
        <title>Sex-dependent and race-dependent association of XPNPEP2 C-2399A polymorphism with angiotensin-converting enzyme inhibitor-associated angioedema.</title>
        <authorList>
            <person name="Woodard-Grice A.V."/>
            <person name="Lucisano A.C."/>
            <person name="Byrd J.B."/>
            <person name="Stone E.R."/>
            <person name="Simmons W.H."/>
            <person name="Brown N.J."/>
        </authorList>
    </citation>
    <scope>INVOLVEMENT IN AEACEI</scope>
</reference>
<reference key="9">
    <citation type="journal article" date="2011" name="Hum. Mutat.">
        <title>A functional XPNPEP2 promoter haplotype leads to reduced plasma aminopeptidase P and increased risk of ACE inhibitor-induced angioedema.</title>
        <authorList>
            <person name="Cilia La Corte A.L."/>
            <person name="Carter A.M."/>
            <person name="Rice G.I."/>
            <person name="Duan Q.L."/>
            <person name="Rouleau G.A."/>
            <person name="Adam A."/>
            <person name="Grant P.J."/>
            <person name="Hooper N.M."/>
        </authorList>
    </citation>
    <scope>INVOLVEMENT IN AEACEI</scope>
    <scope>VARIANTS ILE-215; ILE-223 AND ASN-232</scope>
</reference>